<name>FADJ_ECO7I</name>
<evidence type="ECO:0000255" key="1">
    <source>
        <dbReference type="HAMAP-Rule" id="MF_01617"/>
    </source>
</evidence>
<accession>B7NP24</accession>
<sequence length="714" mass="77108">MEMASAFTLNVRLDNIAIITIDVPGEKMNTLKAEFASQVRAIIKQLRENKELRGVVFISAKPDNFIAGADINMIGNCKTAQEAEVLARQGQQLMAEIHALPVPVIAAIHGACLGGGLELALACHGRVCTDDAKTVLGLPEVQLGLLPGSGGTQRLPRLIGVSTALEMILTGKQLRAKQALKLGLVDDVVPQSILLEAAVELAKQDRPSSRPLPVRERILAGPLGRALLFKMVGKKTEHKTQGNYPATERILEVVETGLAQGTSSGYDAEARAFGELAMTPQSQALRNIFFASTEVKKDPGSDAPPAPLNSVGILGGGLMGGGIAYVTACKAGLPVRIKDINPQGINHALKYSWDQLEGKVRRRHLKASERDKQLALISGTTDYCGFAHRDLIIEAVFENLELKQQMVAEVEQNCATHTIFASNTSSLPIGDIAAHAARPEQVIGLHFFSPVEKMPLVEIIPHASTSAQTIATTVKLAKKQGKTPIVVRDKAGFYVNRILAPYINEAIRMLTEGERIEHIDAALVKFGFPVGPIQLLDEVGIDTGTKIIPVLEAAYGERFSAPANVVSSILNDDRKGRKNGRGFYLYGQKGRKSKKQVDPAIYPLIGAQGQGRLSAPQVAERCVMLMLNEAVRCLDEQVIRSVRDGDIGAVFGIGFPPFLGGPFRYIDSLGAGEVVAIMQRLATQYGSRFTPCERLVEMSKRGESFWKTTATDLQ</sequence>
<comment type="function">
    <text evidence="1">Catalyzes the formation of a hydroxyacyl-CoA by addition of water on enoyl-CoA. Also exhibits 3-hydroxyacyl-CoA epimerase and 3-hydroxyacyl-CoA dehydrogenase activities.</text>
</comment>
<comment type="catalytic activity">
    <reaction evidence="1">
        <text>a (3S)-3-hydroxyacyl-CoA = a (2E)-enoyl-CoA + H2O</text>
        <dbReference type="Rhea" id="RHEA:16105"/>
        <dbReference type="ChEBI" id="CHEBI:15377"/>
        <dbReference type="ChEBI" id="CHEBI:57318"/>
        <dbReference type="ChEBI" id="CHEBI:58856"/>
        <dbReference type="EC" id="4.2.1.17"/>
    </reaction>
</comment>
<comment type="catalytic activity">
    <reaction evidence="1">
        <text>a 4-saturated-(3S)-3-hydroxyacyl-CoA = a (3E)-enoyl-CoA + H2O</text>
        <dbReference type="Rhea" id="RHEA:20724"/>
        <dbReference type="ChEBI" id="CHEBI:15377"/>
        <dbReference type="ChEBI" id="CHEBI:58521"/>
        <dbReference type="ChEBI" id="CHEBI:137480"/>
        <dbReference type="EC" id="4.2.1.17"/>
    </reaction>
</comment>
<comment type="catalytic activity">
    <reaction evidence="1">
        <text>a (3S)-3-hydroxyacyl-CoA + NAD(+) = a 3-oxoacyl-CoA + NADH + H(+)</text>
        <dbReference type="Rhea" id="RHEA:22432"/>
        <dbReference type="ChEBI" id="CHEBI:15378"/>
        <dbReference type="ChEBI" id="CHEBI:57318"/>
        <dbReference type="ChEBI" id="CHEBI:57540"/>
        <dbReference type="ChEBI" id="CHEBI:57945"/>
        <dbReference type="ChEBI" id="CHEBI:90726"/>
        <dbReference type="EC" id="1.1.1.35"/>
    </reaction>
</comment>
<comment type="catalytic activity">
    <reaction evidence="1">
        <text>(3S)-3-hydroxybutanoyl-CoA = (3R)-3-hydroxybutanoyl-CoA</text>
        <dbReference type="Rhea" id="RHEA:21760"/>
        <dbReference type="ChEBI" id="CHEBI:57315"/>
        <dbReference type="ChEBI" id="CHEBI:57316"/>
        <dbReference type="EC" id="5.1.2.3"/>
    </reaction>
</comment>
<comment type="pathway">
    <text evidence="1">Lipid metabolism; fatty acid beta-oxidation.</text>
</comment>
<comment type="subunit">
    <text evidence="1">Heterotetramer of two alpha chains (FadJ) and two beta chains (FadI).</text>
</comment>
<comment type="subcellular location">
    <subcellularLocation>
        <location evidence="1">Cytoplasm</location>
    </subcellularLocation>
</comment>
<comment type="similarity">
    <text evidence="1">In the N-terminal section; belongs to the enoyl-CoA hydratase/isomerase family.</text>
</comment>
<comment type="similarity">
    <text evidence="1">In the central section; belongs to the 3-hydroxyacyl-CoA dehydrogenase family.</text>
</comment>
<proteinExistence type="inferred from homology"/>
<dbReference type="EC" id="4.2.1.17" evidence="1"/>
<dbReference type="EC" id="5.1.2.3" evidence="1"/>
<dbReference type="EC" id="1.1.1.35" evidence="1"/>
<dbReference type="EMBL" id="CU928164">
    <property type="protein sequence ID" value="CAR18618.1"/>
    <property type="molecule type" value="Genomic_DNA"/>
</dbReference>
<dbReference type="RefSeq" id="WP_000425010.1">
    <property type="nucleotide sequence ID" value="NC_011750.1"/>
</dbReference>
<dbReference type="RefSeq" id="YP_002408448.1">
    <property type="nucleotide sequence ID" value="NC_011750.1"/>
</dbReference>
<dbReference type="SMR" id="B7NP24"/>
<dbReference type="STRING" id="585057.ECIAI39_2493"/>
<dbReference type="KEGG" id="ect:ECIAI39_2493"/>
<dbReference type="PATRIC" id="fig|585057.6.peg.2596"/>
<dbReference type="HOGENOM" id="CLU_009834_16_1_6"/>
<dbReference type="UniPathway" id="UPA00659"/>
<dbReference type="Proteomes" id="UP000000749">
    <property type="component" value="Chromosome"/>
</dbReference>
<dbReference type="GO" id="GO:0005737">
    <property type="term" value="C:cytoplasm"/>
    <property type="evidence" value="ECO:0007669"/>
    <property type="project" value="UniProtKB-SubCell"/>
</dbReference>
<dbReference type="GO" id="GO:0008692">
    <property type="term" value="F:3-hydroxybutyryl-CoA epimerase activity"/>
    <property type="evidence" value="ECO:0007669"/>
    <property type="project" value="UniProtKB-UniRule"/>
</dbReference>
<dbReference type="GO" id="GO:0004300">
    <property type="term" value="F:enoyl-CoA hydratase activity"/>
    <property type="evidence" value="ECO:0007669"/>
    <property type="project" value="UniProtKB-UniRule"/>
</dbReference>
<dbReference type="GO" id="GO:0016509">
    <property type="term" value="F:long-chain-3-hydroxyacyl-CoA dehydrogenase activity"/>
    <property type="evidence" value="ECO:0007669"/>
    <property type="project" value="TreeGrafter"/>
</dbReference>
<dbReference type="GO" id="GO:0070403">
    <property type="term" value="F:NAD+ binding"/>
    <property type="evidence" value="ECO:0007669"/>
    <property type="project" value="InterPro"/>
</dbReference>
<dbReference type="GO" id="GO:0006635">
    <property type="term" value="P:fatty acid beta-oxidation"/>
    <property type="evidence" value="ECO:0007669"/>
    <property type="project" value="UniProtKB-UniRule"/>
</dbReference>
<dbReference type="CDD" id="cd06558">
    <property type="entry name" value="crotonase-like"/>
    <property type="match status" value="1"/>
</dbReference>
<dbReference type="FunFam" id="1.10.1040.50:FF:000003">
    <property type="entry name" value="Fatty acid oxidation complex subunit alpha"/>
    <property type="match status" value="1"/>
</dbReference>
<dbReference type="FunFam" id="3.90.226.10:FF:000011">
    <property type="entry name" value="Fatty acid oxidation complex subunit alpha"/>
    <property type="match status" value="1"/>
</dbReference>
<dbReference type="FunFam" id="3.40.50.720:FF:000009">
    <property type="entry name" value="Fatty oxidation complex, alpha subunit"/>
    <property type="match status" value="1"/>
</dbReference>
<dbReference type="Gene3D" id="1.10.1040.50">
    <property type="match status" value="1"/>
</dbReference>
<dbReference type="Gene3D" id="3.90.226.10">
    <property type="entry name" value="2-enoyl-CoA Hydratase, Chain A, domain 1"/>
    <property type="match status" value="1"/>
</dbReference>
<dbReference type="Gene3D" id="3.40.50.720">
    <property type="entry name" value="NAD(P)-binding Rossmann-like Domain"/>
    <property type="match status" value="1"/>
</dbReference>
<dbReference type="HAMAP" id="MF_01617">
    <property type="entry name" value="FadJ"/>
    <property type="match status" value="1"/>
</dbReference>
<dbReference type="InterPro" id="IPR006180">
    <property type="entry name" value="3-OHacyl-CoA_DH_CS"/>
</dbReference>
<dbReference type="InterPro" id="IPR006176">
    <property type="entry name" value="3-OHacyl-CoA_DH_NAD-bd"/>
</dbReference>
<dbReference type="InterPro" id="IPR006108">
    <property type="entry name" value="3HC_DH_C"/>
</dbReference>
<dbReference type="InterPro" id="IPR008927">
    <property type="entry name" value="6-PGluconate_DH-like_C_sf"/>
</dbReference>
<dbReference type="InterPro" id="IPR029045">
    <property type="entry name" value="ClpP/crotonase-like_dom_sf"/>
</dbReference>
<dbReference type="InterPro" id="IPR001753">
    <property type="entry name" value="Enoyl-CoA_hydra/iso"/>
</dbReference>
<dbReference type="InterPro" id="IPR050136">
    <property type="entry name" value="FA_oxidation_alpha_subunit"/>
</dbReference>
<dbReference type="InterPro" id="IPR012802">
    <property type="entry name" value="FadJ"/>
</dbReference>
<dbReference type="InterPro" id="IPR036291">
    <property type="entry name" value="NAD(P)-bd_dom_sf"/>
</dbReference>
<dbReference type="NCBIfam" id="TIGR02440">
    <property type="entry name" value="FadJ"/>
    <property type="match status" value="1"/>
</dbReference>
<dbReference type="NCBIfam" id="NF008363">
    <property type="entry name" value="PRK11154.1"/>
    <property type="match status" value="1"/>
</dbReference>
<dbReference type="PANTHER" id="PTHR43612">
    <property type="entry name" value="TRIFUNCTIONAL ENZYME SUBUNIT ALPHA"/>
    <property type="match status" value="1"/>
</dbReference>
<dbReference type="PANTHER" id="PTHR43612:SF3">
    <property type="entry name" value="TRIFUNCTIONAL ENZYME SUBUNIT ALPHA, MITOCHONDRIAL"/>
    <property type="match status" value="1"/>
</dbReference>
<dbReference type="Pfam" id="PF00725">
    <property type="entry name" value="3HCDH"/>
    <property type="match status" value="2"/>
</dbReference>
<dbReference type="Pfam" id="PF02737">
    <property type="entry name" value="3HCDH_N"/>
    <property type="match status" value="1"/>
</dbReference>
<dbReference type="Pfam" id="PF00378">
    <property type="entry name" value="ECH_1"/>
    <property type="match status" value="1"/>
</dbReference>
<dbReference type="SUPFAM" id="SSF48179">
    <property type="entry name" value="6-phosphogluconate dehydrogenase C-terminal domain-like"/>
    <property type="match status" value="2"/>
</dbReference>
<dbReference type="SUPFAM" id="SSF52096">
    <property type="entry name" value="ClpP/crotonase"/>
    <property type="match status" value="1"/>
</dbReference>
<dbReference type="SUPFAM" id="SSF51735">
    <property type="entry name" value="NAD(P)-binding Rossmann-fold domains"/>
    <property type="match status" value="1"/>
</dbReference>
<dbReference type="PROSITE" id="PS00067">
    <property type="entry name" value="3HCDH"/>
    <property type="match status" value="1"/>
</dbReference>
<reference key="1">
    <citation type="journal article" date="2009" name="PLoS Genet.">
        <title>Organised genome dynamics in the Escherichia coli species results in highly diverse adaptive paths.</title>
        <authorList>
            <person name="Touchon M."/>
            <person name="Hoede C."/>
            <person name="Tenaillon O."/>
            <person name="Barbe V."/>
            <person name="Baeriswyl S."/>
            <person name="Bidet P."/>
            <person name="Bingen E."/>
            <person name="Bonacorsi S."/>
            <person name="Bouchier C."/>
            <person name="Bouvet O."/>
            <person name="Calteau A."/>
            <person name="Chiapello H."/>
            <person name="Clermont O."/>
            <person name="Cruveiller S."/>
            <person name="Danchin A."/>
            <person name="Diard M."/>
            <person name="Dossat C."/>
            <person name="Karoui M.E."/>
            <person name="Frapy E."/>
            <person name="Garry L."/>
            <person name="Ghigo J.M."/>
            <person name="Gilles A.M."/>
            <person name="Johnson J."/>
            <person name="Le Bouguenec C."/>
            <person name="Lescat M."/>
            <person name="Mangenot S."/>
            <person name="Martinez-Jehanne V."/>
            <person name="Matic I."/>
            <person name="Nassif X."/>
            <person name="Oztas S."/>
            <person name="Petit M.A."/>
            <person name="Pichon C."/>
            <person name="Rouy Z."/>
            <person name="Ruf C.S."/>
            <person name="Schneider D."/>
            <person name="Tourret J."/>
            <person name="Vacherie B."/>
            <person name="Vallenet D."/>
            <person name="Medigue C."/>
            <person name="Rocha E.P.C."/>
            <person name="Denamur E."/>
        </authorList>
    </citation>
    <scope>NUCLEOTIDE SEQUENCE [LARGE SCALE GENOMIC DNA]</scope>
    <source>
        <strain>IAI39 / ExPEC</strain>
    </source>
</reference>
<gene>
    <name evidence="1" type="primary">fadJ</name>
    <name type="ordered locus">ECIAI39_2493</name>
</gene>
<keyword id="KW-0963">Cytoplasm</keyword>
<keyword id="KW-0276">Fatty acid metabolism</keyword>
<keyword id="KW-0413">Isomerase</keyword>
<keyword id="KW-0442">Lipid degradation</keyword>
<keyword id="KW-0443">Lipid metabolism</keyword>
<keyword id="KW-0456">Lyase</keyword>
<keyword id="KW-0511">Multifunctional enzyme</keyword>
<keyword id="KW-0520">NAD</keyword>
<keyword id="KW-0560">Oxidoreductase</keyword>
<feature type="chain" id="PRO_1000185938" description="Fatty acid oxidation complex subunit alpha">
    <location>
        <begin position="1"/>
        <end position="714"/>
    </location>
</feature>
<feature type="region of interest" description="Enoyl-CoA hydratase" evidence="1">
    <location>
        <begin position="1"/>
        <end position="190"/>
    </location>
</feature>
<feature type="region of interest" description="3-hydroxyacyl-CoA dehydrogenase" evidence="1">
    <location>
        <begin position="306"/>
        <end position="714"/>
    </location>
</feature>
<feature type="site" description="Important for catalytic activity" evidence="1">
    <location>
        <position position="118"/>
    </location>
</feature>
<feature type="site" description="Important for catalytic activity" evidence="1">
    <location>
        <position position="140"/>
    </location>
</feature>
<organism>
    <name type="scientific">Escherichia coli O7:K1 (strain IAI39 / ExPEC)</name>
    <dbReference type="NCBI Taxonomy" id="585057"/>
    <lineage>
        <taxon>Bacteria</taxon>
        <taxon>Pseudomonadati</taxon>
        <taxon>Pseudomonadota</taxon>
        <taxon>Gammaproteobacteria</taxon>
        <taxon>Enterobacterales</taxon>
        <taxon>Enterobacteriaceae</taxon>
        <taxon>Escherichia</taxon>
    </lineage>
</organism>
<protein>
    <recommendedName>
        <fullName evidence="1">Fatty acid oxidation complex subunit alpha</fullName>
    </recommendedName>
    <domain>
        <recommendedName>
            <fullName evidence="1">Enoyl-CoA hydratase/3-hydroxybutyryl-CoA epimerase</fullName>
            <ecNumber evidence="1">4.2.1.17</ecNumber>
            <ecNumber evidence="1">5.1.2.3</ecNumber>
        </recommendedName>
    </domain>
    <domain>
        <recommendedName>
            <fullName evidence="1">3-hydroxyacyl-CoA dehydrogenase</fullName>
            <ecNumber evidence="1">1.1.1.35</ecNumber>
        </recommendedName>
    </domain>
</protein>